<sequence>MAELTVEVRGSNGAFYKGFIKDVHEDSLTVVFENNWQPERQVPFNEVRLPPPPDIKKEISEGDEVEVYSRANDQEPCGWWLAKVRMMKGEFYVIEYAACDATYNEIVTFERLRPVNQNKTVKKNTFFKCTVDVPEDLREACANENAHKDFKKAVGACRIFYHPETTQLMILSASEATVKRVNILSDMHLRSIRTKLMLMSRNEEATKHLECTKQLAAAFHEEFVVREDLMGLAIGTHGSNIQQARKVPGVTAIELDEDTGTFRIYGESAEAVKKARGFLEFVEDFIQVPRNLVGKVIGKNGKVIQEIVDKSGVVRVRIEGDNENKLPREDGMVPFVFVGTKESIGNVQVLLEYHIAYLKEVEQLRMERLQIDEQLRQIGMGFRPSSTRGPEREKGYATDESTVSSVQGSRSYSGRGRGRRGPNYTSGYGTNSELSNPSETESERKDELSDWSLAGEDDRETRHQRDSRRRPGGRGRSVSGGRGRGGPRGGKSSISSVLKDPDSNPYSLLDNTESDQTADTDASESHHSTNRRRRSRRRRTDEDAVLMDGLTESDTASVNENGLDDSEKKPQRRNRSRRRRFRGQAEDRQPVTVADYISRAESQSRQRNLPRETLAKNKKEMAKDVIEEHGPSEKAINGPTSASGDEIPKLPRTLGEEKTKTLKEDSTQEAAVLNGVS</sequence>
<name>FXR1_MOUSE</name>
<gene>
    <name evidence="27 30" type="primary">Fxr1</name>
    <name type="synonym">Fxr1h</name>
</gene>
<feature type="initiator methionine" description="Removed" evidence="2">
    <location>
        <position position="1"/>
    </location>
</feature>
<feature type="chain" id="PRO_0000050107" description="RNA-binding protein FXR1">
    <location>
        <begin position="2"/>
        <end position="677"/>
    </location>
</feature>
<feature type="domain" description="Agenet-like 1" evidence="6">
    <location>
        <begin position="4"/>
        <end position="50"/>
    </location>
</feature>
<feature type="domain" description="Agenet-like 2" evidence="6">
    <location>
        <begin position="63"/>
        <end position="115"/>
    </location>
</feature>
<feature type="domain" description="KH 1" evidence="5">
    <location>
        <begin position="222"/>
        <end position="251"/>
    </location>
</feature>
<feature type="domain" description="KH 2" evidence="5">
    <location>
        <begin position="285"/>
        <end position="314"/>
    </location>
</feature>
<feature type="region of interest" description="CC1 domain" evidence="2">
    <location>
        <begin position="201"/>
        <end position="208"/>
    </location>
</feature>
<feature type="region of interest" description="CC2 domain" evidence="2">
    <location>
        <begin position="353"/>
        <end position="379"/>
    </location>
</feature>
<feature type="region of interest" description="Disordered" evidence="22">
    <location>
        <begin position="380"/>
        <end position="677"/>
    </location>
</feature>
<feature type="region of interest" description="RNA-binding RGG-box">
    <location>
        <begin position="471"/>
        <end position="486"/>
    </location>
</feature>
<feature type="compositionally biased region" description="Low complexity" evidence="7">
    <location>
        <begin position="404"/>
        <end position="414"/>
    </location>
</feature>
<feature type="compositionally biased region" description="Polar residues" evidence="7">
    <location>
        <begin position="423"/>
        <end position="439"/>
    </location>
</feature>
<feature type="compositionally biased region" description="Gly residues" evidence="7">
    <location>
        <begin position="474"/>
        <end position="489"/>
    </location>
</feature>
<feature type="compositionally biased region" description="Acidic residues" evidence="7">
    <location>
        <begin position="512"/>
        <end position="522"/>
    </location>
</feature>
<feature type="compositionally biased region" description="Basic residues" evidence="7">
    <location>
        <begin position="528"/>
        <end position="538"/>
    </location>
</feature>
<feature type="compositionally biased region" description="Basic residues" evidence="7">
    <location>
        <begin position="570"/>
        <end position="582"/>
    </location>
</feature>
<feature type="compositionally biased region" description="Basic and acidic residues" evidence="7">
    <location>
        <begin position="609"/>
        <end position="632"/>
    </location>
</feature>
<feature type="compositionally biased region" description="Basic and acidic residues" evidence="7">
    <location>
        <begin position="646"/>
        <end position="666"/>
    </location>
</feature>
<feature type="modified residue" description="N-acetylalanine" evidence="2">
    <location>
        <position position="2"/>
    </location>
</feature>
<feature type="modified residue" description="Phosphotyrosine" evidence="32">
    <location>
        <position position="68"/>
    </location>
</feature>
<feature type="modified residue" description="Phosphothreonine" evidence="4">
    <location>
        <position position="398"/>
    </location>
</feature>
<feature type="modified residue" description="Phosphothreonine" evidence="2">
    <location>
        <position position="430"/>
    </location>
</feature>
<feature type="modified residue" description="Phosphoserine" evidence="4">
    <location>
        <position position="432"/>
    </location>
</feature>
<feature type="modified residue" description="Phosphoserine" evidence="31 33">
    <location>
        <position position="435"/>
    </location>
</feature>
<feature type="modified residue" description="Phosphoserine" evidence="33">
    <location>
        <position position="438"/>
    </location>
</feature>
<feature type="modified residue" description="Phosphoserine" evidence="31">
    <location>
        <position position="449"/>
    </location>
</feature>
<feature type="modified residue" description="Phosphoserine" evidence="2">
    <location>
        <position position="452"/>
    </location>
</feature>
<feature type="modified residue" description="Asymmetric dimethylarginine; alternate" evidence="1">
    <location>
        <position position="476"/>
    </location>
</feature>
<feature type="modified residue" description="Omega-N-methylarginine; alternate" evidence="1">
    <location>
        <position position="476"/>
    </location>
</feature>
<feature type="modified residue" description="Asymmetric dimethylarginine; alternate" evidence="1">
    <location>
        <position position="482"/>
    </location>
</feature>
<feature type="modified residue" description="Omega-N-methylarginine; alternate" evidence="1">
    <location>
        <position position="482"/>
    </location>
</feature>
<feature type="modified residue" description="Asymmetric dimethylarginine; alternate" evidence="1">
    <location>
        <position position="484"/>
    </location>
</feature>
<feature type="modified residue" description="Omega-N-methylarginine; alternate" evidence="1">
    <location>
        <position position="484"/>
    </location>
</feature>
<feature type="modified residue" description="Phosphothreonine" evidence="33">
    <location>
        <position position="512"/>
    </location>
</feature>
<feature type="modified residue" description="Phosphoserine" evidence="2">
    <location>
        <position position="514"/>
    </location>
</feature>
<feature type="modified residue" description="Phosphoserine" evidence="3">
    <location>
        <position position="553"/>
    </location>
</feature>
<feature type="modified residue" description="Phosphoserine" evidence="33">
    <location>
        <position position="643"/>
    </location>
</feature>
<feature type="modified residue" description="Phosphothreonine" evidence="2">
    <location>
        <position position="667"/>
    </location>
</feature>
<feature type="cross-link" description="Glycyl lysine isopeptide (Lys-Gly) (interchain with G-Cter in SUMO2)" evidence="2">
    <location>
        <position position="56"/>
    </location>
</feature>
<feature type="splice variant" id="VSP_002836" description="In isoform A, isoform D and isoform F." evidence="23 25 27">
    <location>
        <begin position="380"/>
        <end position="408"/>
    </location>
</feature>
<feature type="splice variant" id="VSP_002837" description="In isoform G." evidence="23">
    <location>
        <begin position="430"/>
        <end position="455"/>
    </location>
</feature>
<feature type="splice variant" id="VSP_002839" description="In isoform C and isoform D." evidence="23">
    <location>
        <begin position="564"/>
        <end position="590"/>
    </location>
</feature>
<feature type="splice variant" id="VSP_002838" description="In isoform A and isoform B." evidence="23 25 27">
    <original>DDSEK</original>
    <variation>GKRCD</variation>
    <location>
        <begin position="564"/>
        <end position="568"/>
    </location>
</feature>
<feature type="splice variant" id="VSP_002840" description="In isoform A." evidence="23 25 27">
    <location>
        <begin position="569"/>
        <end position="677"/>
    </location>
</feature>
<feature type="mutagenesis site" description="Abolished ability to undergo liquid-liquid phase separation and promote translation of target mRNAs. Male infertility in knokin mice." evidence="22">
    <original>L</original>
    <variation>P</variation>
    <location>
        <position position="351"/>
    </location>
</feature>
<feature type="mutagenesis site" description="Decreased phosphorylation by GSK3B." evidence="15">
    <original>S</original>
    <variation>A</variation>
    <location>
        <position position="409"/>
    </location>
</feature>
<feature type="mutagenesis site" description="Decreased phosphorylation by GSK3B." evidence="15">
    <original>S</original>
    <variation>A</variation>
    <location>
        <position position="426"/>
    </location>
</feature>
<feature type="mutagenesis site" description="Decreased phosphorylation by GSK3B." evidence="15">
    <original>S</original>
    <variation>A</variation>
    <location>
        <position position="438"/>
    </location>
</feature>
<feature type="mutagenesis site" description="Decreased phosphorylation by GSK3B." evidence="15">
    <original>S</original>
    <variation>A</variation>
    <location>
        <position position="492"/>
    </location>
</feature>
<feature type="mutagenesis site" description="Decreased phosphorylation by GSK3B." evidence="15">
    <original>S</original>
    <variation>A</variation>
    <location>
        <position position="503"/>
    </location>
</feature>
<feature type="mutagenesis site" description="Decreased phosphorylation by GSK3B." evidence="15">
    <original>S</original>
    <variation>A</variation>
    <location>
        <position position="525"/>
    </location>
</feature>
<feature type="mutagenesis site" description="Decreased phosphorylation by GSK3B." evidence="15">
    <original>T</original>
    <variation>A</variation>
    <location>
        <position position="551"/>
    </location>
</feature>
<feature type="mutagenesis site" description="Decreased phosphorylation by GSK3B." evidence="15">
    <original>S</original>
    <variation>A</variation>
    <location>
        <position position="553"/>
    </location>
</feature>
<feature type="mutagenesis site" description="Decreased phosphorylation by GSK3B." evidence="15">
    <original>S</original>
    <variation>A</variation>
    <location>
        <position position="598"/>
    </location>
</feature>
<feature type="sequence conflict" description="In Ref. 3; AAH19139." evidence="28" ref="3">
    <original>D</original>
    <variation>H</variation>
    <location>
        <position position="136"/>
    </location>
</feature>
<protein>
    <recommendedName>
        <fullName evidence="28">RNA-binding protein FXR1</fullName>
        <shortName evidence="26">FXR1P</shortName>
        <shortName evidence="24">mFxr1p</shortName>
    </recommendedName>
</protein>
<dbReference type="EMBL" id="X90875">
    <property type="protein sequence ID" value="CAA62383.1"/>
    <property type="molecule type" value="mRNA"/>
</dbReference>
<dbReference type="EMBL" id="AF124385">
    <property type="protein sequence ID" value="AAD30211.1"/>
    <property type="molecule type" value="mRNA"/>
</dbReference>
<dbReference type="EMBL" id="AF124394">
    <property type="protein sequence ID" value="AAD30212.1"/>
    <property type="molecule type" value="Genomic_DNA"/>
</dbReference>
<dbReference type="EMBL" id="AF124386">
    <property type="protein sequence ID" value="AAD30212.1"/>
    <property type="status" value="JOINED"/>
    <property type="molecule type" value="Genomic_DNA"/>
</dbReference>
<dbReference type="EMBL" id="AF124387">
    <property type="protein sequence ID" value="AAD30212.1"/>
    <property type="status" value="JOINED"/>
    <property type="molecule type" value="Genomic_DNA"/>
</dbReference>
<dbReference type="EMBL" id="AF124388">
    <property type="protein sequence ID" value="AAD30212.1"/>
    <property type="status" value="JOINED"/>
    <property type="molecule type" value="Genomic_DNA"/>
</dbReference>
<dbReference type="EMBL" id="AF124389">
    <property type="protein sequence ID" value="AAD30212.1"/>
    <property type="status" value="JOINED"/>
    <property type="molecule type" value="Genomic_DNA"/>
</dbReference>
<dbReference type="EMBL" id="AF124390">
    <property type="protein sequence ID" value="AAD30212.1"/>
    <property type="status" value="JOINED"/>
    <property type="molecule type" value="Genomic_DNA"/>
</dbReference>
<dbReference type="EMBL" id="AF124391">
    <property type="protein sequence ID" value="AAD30212.1"/>
    <property type="status" value="JOINED"/>
    <property type="molecule type" value="Genomic_DNA"/>
</dbReference>
<dbReference type="EMBL" id="AF124392">
    <property type="protein sequence ID" value="AAD30212.1"/>
    <property type="status" value="JOINED"/>
    <property type="molecule type" value="Genomic_DNA"/>
</dbReference>
<dbReference type="EMBL" id="AF124393">
    <property type="protein sequence ID" value="AAD30212.1"/>
    <property type="status" value="JOINED"/>
    <property type="molecule type" value="Genomic_DNA"/>
</dbReference>
<dbReference type="EMBL" id="AF124394">
    <property type="protein sequence ID" value="AAD30213.1"/>
    <property type="molecule type" value="Genomic_DNA"/>
</dbReference>
<dbReference type="EMBL" id="AF124386">
    <property type="protein sequence ID" value="AAD30213.1"/>
    <property type="status" value="JOINED"/>
    <property type="molecule type" value="Genomic_DNA"/>
</dbReference>
<dbReference type="EMBL" id="AF124387">
    <property type="protein sequence ID" value="AAD30213.1"/>
    <property type="status" value="JOINED"/>
    <property type="molecule type" value="Genomic_DNA"/>
</dbReference>
<dbReference type="EMBL" id="AF124388">
    <property type="protein sequence ID" value="AAD30213.1"/>
    <property type="status" value="JOINED"/>
    <property type="molecule type" value="Genomic_DNA"/>
</dbReference>
<dbReference type="EMBL" id="AF124389">
    <property type="protein sequence ID" value="AAD30213.1"/>
    <property type="status" value="JOINED"/>
    <property type="molecule type" value="Genomic_DNA"/>
</dbReference>
<dbReference type="EMBL" id="AF124390">
    <property type="protein sequence ID" value="AAD30213.1"/>
    <property type="status" value="JOINED"/>
    <property type="molecule type" value="Genomic_DNA"/>
</dbReference>
<dbReference type="EMBL" id="AF124391">
    <property type="protein sequence ID" value="AAD30213.1"/>
    <property type="status" value="JOINED"/>
    <property type="molecule type" value="Genomic_DNA"/>
</dbReference>
<dbReference type="EMBL" id="AF124392">
    <property type="protein sequence ID" value="AAD30213.1"/>
    <property type="status" value="JOINED"/>
    <property type="molecule type" value="Genomic_DNA"/>
</dbReference>
<dbReference type="EMBL" id="AF124393">
    <property type="protein sequence ID" value="AAD30213.1"/>
    <property type="status" value="JOINED"/>
    <property type="molecule type" value="Genomic_DNA"/>
</dbReference>
<dbReference type="EMBL" id="AF124394">
    <property type="protein sequence ID" value="AAD30214.1"/>
    <property type="molecule type" value="Genomic_DNA"/>
</dbReference>
<dbReference type="EMBL" id="AF124386">
    <property type="protein sequence ID" value="AAD30214.1"/>
    <property type="status" value="JOINED"/>
    <property type="molecule type" value="Genomic_DNA"/>
</dbReference>
<dbReference type="EMBL" id="AF124387">
    <property type="protein sequence ID" value="AAD30214.1"/>
    <property type="status" value="JOINED"/>
    <property type="molecule type" value="Genomic_DNA"/>
</dbReference>
<dbReference type="EMBL" id="AF124388">
    <property type="protein sequence ID" value="AAD30214.1"/>
    <property type="status" value="JOINED"/>
    <property type="molecule type" value="Genomic_DNA"/>
</dbReference>
<dbReference type="EMBL" id="AF124389">
    <property type="protein sequence ID" value="AAD30214.1"/>
    <property type="status" value="JOINED"/>
    <property type="molecule type" value="Genomic_DNA"/>
</dbReference>
<dbReference type="EMBL" id="AF124390">
    <property type="protein sequence ID" value="AAD30214.1"/>
    <property type="status" value="JOINED"/>
    <property type="molecule type" value="Genomic_DNA"/>
</dbReference>
<dbReference type="EMBL" id="AF124391">
    <property type="protein sequence ID" value="AAD30214.1"/>
    <property type="status" value="JOINED"/>
    <property type="molecule type" value="Genomic_DNA"/>
</dbReference>
<dbReference type="EMBL" id="AF124392">
    <property type="protein sequence ID" value="AAD30214.1"/>
    <property type="status" value="JOINED"/>
    <property type="molecule type" value="Genomic_DNA"/>
</dbReference>
<dbReference type="EMBL" id="AF124393">
    <property type="protein sequence ID" value="AAD30214.1"/>
    <property type="status" value="JOINED"/>
    <property type="molecule type" value="Genomic_DNA"/>
</dbReference>
<dbReference type="EMBL" id="AF124394">
    <property type="protein sequence ID" value="AAD30215.1"/>
    <property type="molecule type" value="Genomic_DNA"/>
</dbReference>
<dbReference type="EMBL" id="AF124386">
    <property type="protein sequence ID" value="AAD30215.1"/>
    <property type="status" value="JOINED"/>
    <property type="molecule type" value="Genomic_DNA"/>
</dbReference>
<dbReference type="EMBL" id="AF124387">
    <property type="protein sequence ID" value="AAD30215.1"/>
    <property type="status" value="JOINED"/>
    <property type="molecule type" value="Genomic_DNA"/>
</dbReference>
<dbReference type="EMBL" id="AF124388">
    <property type="protein sequence ID" value="AAD30215.1"/>
    <property type="status" value="JOINED"/>
    <property type="molecule type" value="Genomic_DNA"/>
</dbReference>
<dbReference type="EMBL" id="AF124389">
    <property type="protein sequence ID" value="AAD30215.1"/>
    <property type="status" value="JOINED"/>
    <property type="molecule type" value="Genomic_DNA"/>
</dbReference>
<dbReference type="EMBL" id="AF124390">
    <property type="protein sequence ID" value="AAD30215.1"/>
    <property type="status" value="JOINED"/>
    <property type="molecule type" value="Genomic_DNA"/>
</dbReference>
<dbReference type="EMBL" id="AF124391">
    <property type="protein sequence ID" value="AAD30215.1"/>
    <property type="status" value="JOINED"/>
    <property type="molecule type" value="Genomic_DNA"/>
</dbReference>
<dbReference type="EMBL" id="AF124392">
    <property type="protein sequence ID" value="AAD30215.1"/>
    <property type="status" value="JOINED"/>
    <property type="molecule type" value="Genomic_DNA"/>
</dbReference>
<dbReference type="EMBL" id="AF124393">
    <property type="protein sequence ID" value="AAD30215.1"/>
    <property type="status" value="JOINED"/>
    <property type="molecule type" value="Genomic_DNA"/>
</dbReference>
<dbReference type="EMBL" id="AF124394">
    <property type="protein sequence ID" value="AAD30216.1"/>
    <property type="molecule type" value="Genomic_DNA"/>
</dbReference>
<dbReference type="EMBL" id="AF124386">
    <property type="protein sequence ID" value="AAD30216.1"/>
    <property type="status" value="JOINED"/>
    <property type="molecule type" value="Genomic_DNA"/>
</dbReference>
<dbReference type="EMBL" id="AF124387">
    <property type="protein sequence ID" value="AAD30216.1"/>
    <property type="status" value="JOINED"/>
    <property type="molecule type" value="Genomic_DNA"/>
</dbReference>
<dbReference type="EMBL" id="AF124388">
    <property type="protein sequence ID" value="AAD30216.1"/>
    <property type="status" value="JOINED"/>
    <property type="molecule type" value="Genomic_DNA"/>
</dbReference>
<dbReference type="EMBL" id="AF124389">
    <property type="protein sequence ID" value="AAD30216.1"/>
    <property type="status" value="JOINED"/>
    <property type="molecule type" value="Genomic_DNA"/>
</dbReference>
<dbReference type="EMBL" id="AF124390">
    <property type="protein sequence ID" value="AAD30216.1"/>
    <property type="status" value="JOINED"/>
    <property type="molecule type" value="Genomic_DNA"/>
</dbReference>
<dbReference type="EMBL" id="AF124391">
    <property type="protein sequence ID" value="AAD30216.1"/>
    <property type="status" value="JOINED"/>
    <property type="molecule type" value="Genomic_DNA"/>
</dbReference>
<dbReference type="EMBL" id="AF124392">
    <property type="protein sequence ID" value="AAD30216.1"/>
    <property type="status" value="JOINED"/>
    <property type="molecule type" value="Genomic_DNA"/>
</dbReference>
<dbReference type="EMBL" id="AF124393">
    <property type="protein sequence ID" value="AAD30216.1"/>
    <property type="status" value="JOINED"/>
    <property type="molecule type" value="Genomic_DNA"/>
</dbReference>
<dbReference type="EMBL" id="AF124394">
    <property type="protein sequence ID" value="AAD30217.1"/>
    <property type="molecule type" value="Genomic_DNA"/>
</dbReference>
<dbReference type="EMBL" id="AF124386">
    <property type="protein sequence ID" value="AAD30217.1"/>
    <property type="status" value="JOINED"/>
    <property type="molecule type" value="Genomic_DNA"/>
</dbReference>
<dbReference type="EMBL" id="AF124387">
    <property type="protein sequence ID" value="AAD30217.1"/>
    <property type="status" value="JOINED"/>
    <property type="molecule type" value="Genomic_DNA"/>
</dbReference>
<dbReference type="EMBL" id="AF124388">
    <property type="protein sequence ID" value="AAD30217.1"/>
    <property type="status" value="JOINED"/>
    <property type="molecule type" value="Genomic_DNA"/>
</dbReference>
<dbReference type="EMBL" id="AF124389">
    <property type="protein sequence ID" value="AAD30217.1"/>
    <property type="status" value="JOINED"/>
    <property type="molecule type" value="Genomic_DNA"/>
</dbReference>
<dbReference type="EMBL" id="AF124390">
    <property type="protein sequence ID" value="AAD30217.1"/>
    <property type="status" value="JOINED"/>
    <property type="molecule type" value="Genomic_DNA"/>
</dbReference>
<dbReference type="EMBL" id="AF124391">
    <property type="protein sequence ID" value="AAD30217.1"/>
    <property type="status" value="JOINED"/>
    <property type="molecule type" value="Genomic_DNA"/>
</dbReference>
<dbReference type="EMBL" id="AF124392">
    <property type="protein sequence ID" value="AAD30217.1"/>
    <property type="status" value="JOINED"/>
    <property type="molecule type" value="Genomic_DNA"/>
</dbReference>
<dbReference type="EMBL" id="AF124393">
    <property type="protein sequence ID" value="AAD30217.1"/>
    <property type="status" value="JOINED"/>
    <property type="molecule type" value="Genomic_DNA"/>
</dbReference>
<dbReference type="EMBL" id="AF124394">
    <property type="protein sequence ID" value="AAD30218.1"/>
    <property type="molecule type" value="Genomic_DNA"/>
</dbReference>
<dbReference type="EMBL" id="AF124386">
    <property type="protein sequence ID" value="AAD30218.1"/>
    <property type="status" value="JOINED"/>
    <property type="molecule type" value="Genomic_DNA"/>
</dbReference>
<dbReference type="EMBL" id="AF124387">
    <property type="protein sequence ID" value="AAD30218.1"/>
    <property type="status" value="JOINED"/>
    <property type="molecule type" value="Genomic_DNA"/>
</dbReference>
<dbReference type="EMBL" id="AF124388">
    <property type="protein sequence ID" value="AAD30218.1"/>
    <property type="status" value="JOINED"/>
    <property type="molecule type" value="Genomic_DNA"/>
</dbReference>
<dbReference type="EMBL" id="AF124389">
    <property type="protein sequence ID" value="AAD30218.1"/>
    <property type="status" value="JOINED"/>
    <property type="molecule type" value="Genomic_DNA"/>
</dbReference>
<dbReference type="EMBL" id="AF124390">
    <property type="protein sequence ID" value="AAD30218.1"/>
    <property type="status" value="JOINED"/>
    <property type="molecule type" value="Genomic_DNA"/>
</dbReference>
<dbReference type="EMBL" id="AF124391">
    <property type="protein sequence ID" value="AAD30218.1"/>
    <property type="status" value="JOINED"/>
    <property type="molecule type" value="Genomic_DNA"/>
</dbReference>
<dbReference type="EMBL" id="AF124392">
    <property type="protein sequence ID" value="AAD30218.1"/>
    <property type="status" value="JOINED"/>
    <property type="molecule type" value="Genomic_DNA"/>
</dbReference>
<dbReference type="EMBL" id="AF124393">
    <property type="protein sequence ID" value="AAD30218.1"/>
    <property type="status" value="JOINED"/>
    <property type="molecule type" value="Genomic_DNA"/>
</dbReference>
<dbReference type="EMBL" id="BC019139">
    <property type="protein sequence ID" value="AAH19139.1"/>
    <property type="molecule type" value="mRNA"/>
</dbReference>
<dbReference type="CCDS" id="CCDS50890.1">
    <molecule id="Q61584-2"/>
</dbReference>
<dbReference type="CCDS" id="CCDS50891.1">
    <molecule id="Q61584-1"/>
</dbReference>
<dbReference type="CCDS" id="CCDS79896.1">
    <molecule id="Q61584-5"/>
</dbReference>
<dbReference type="RefSeq" id="NP_001106659.1">
    <molecule id="Q61584-1"/>
    <property type="nucleotide sequence ID" value="NM_001113188.3"/>
</dbReference>
<dbReference type="RefSeq" id="NP_001106660.1">
    <molecule id="Q61584-5"/>
    <property type="nucleotide sequence ID" value="NM_001113189.3"/>
</dbReference>
<dbReference type="RefSeq" id="NP_001415403.1">
    <molecule id="Q61584-4"/>
    <property type="nucleotide sequence ID" value="NM_001428474.1"/>
</dbReference>
<dbReference type="RefSeq" id="NP_001415404.1">
    <molecule id="Q61584-6"/>
    <property type="nucleotide sequence ID" value="NM_001428475.1"/>
</dbReference>
<dbReference type="RefSeq" id="NP_032079.1">
    <molecule id="Q61584-2"/>
    <property type="nucleotide sequence ID" value="NM_008053.4"/>
</dbReference>
<dbReference type="RefSeq" id="XP_006535463.1">
    <property type="nucleotide sequence ID" value="XM_006535400.1"/>
</dbReference>
<dbReference type="RefSeq" id="XP_006535464.1">
    <property type="nucleotide sequence ID" value="XM_006535401.1"/>
</dbReference>
<dbReference type="RefSeq" id="XP_006535465.1">
    <property type="nucleotide sequence ID" value="XM_006535402.1"/>
</dbReference>
<dbReference type="SMR" id="Q61584"/>
<dbReference type="BioGRID" id="199772">
    <property type="interactions" value="185"/>
</dbReference>
<dbReference type="FunCoup" id="Q61584">
    <property type="interactions" value="2202"/>
</dbReference>
<dbReference type="IntAct" id="Q61584">
    <property type="interactions" value="156"/>
</dbReference>
<dbReference type="MINT" id="Q61584"/>
<dbReference type="STRING" id="10090.ENSMUSP00000001620"/>
<dbReference type="BindingDB" id="Q61584"/>
<dbReference type="GlyGen" id="Q61584">
    <property type="glycosylation" value="3 sites, 1 N-linked glycan (1 site), 1 O-linked glycan (1 site)"/>
</dbReference>
<dbReference type="iPTMnet" id="Q61584"/>
<dbReference type="PhosphoSitePlus" id="Q61584"/>
<dbReference type="SwissPalm" id="Q61584"/>
<dbReference type="jPOST" id="Q61584"/>
<dbReference type="PaxDb" id="10090-ENSMUSP00000001620"/>
<dbReference type="PeptideAtlas" id="Q61584"/>
<dbReference type="ProteomicsDB" id="267540">
    <molecule id="Q61584-1"/>
</dbReference>
<dbReference type="ProteomicsDB" id="267541">
    <molecule id="Q61584-2"/>
</dbReference>
<dbReference type="ProteomicsDB" id="267542">
    <molecule id="Q61584-3"/>
</dbReference>
<dbReference type="ProteomicsDB" id="267543">
    <molecule id="Q61584-4"/>
</dbReference>
<dbReference type="ProteomicsDB" id="267544">
    <molecule id="Q61584-5"/>
</dbReference>
<dbReference type="ProteomicsDB" id="267545">
    <molecule id="Q61584-6"/>
</dbReference>
<dbReference type="ProteomicsDB" id="267546">
    <molecule id="Q61584-7"/>
</dbReference>
<dbReference type="Pumba" id="Q61584"/>
<dbReference type="Antibodypedia" id="18845">
    <property type="antibodies" value="345 antibodies from 39 providers"/>
</dbReference>
<dbReference type="DNASU" id="14359"/>
<dbReference type="Ensembl" id="ENSMUST00000001620.13">
    <molecule id="Q61584-1"/>
    <property type="protein sequence ID" value="ENSMUSP00000001620.9"/>
    <property type="gene ID" value="ENSMUSG00000027680.16"/>
</dbReference>
<dbReference type="Ensembl" id="ENSMUST00000197694.5">
    <molecule id="Q61584-5"/>
    <property type="protein sequence ID" value="ENSMUSP00000142441.2"/>
    <property type="gene ID" value="ENSMUSG00000027680.16"/>
</dbReference>
<dbReference type="Ensembl" id="ENSMUST00000200392.5">
    <molecule id="Q61584-2"/>
    <property type="protein sequence ID" value="ENSMUSP00000143392.2"/>
    <property type="gene ID" value="ENSMUSG00000027680.16"/>
</dbReference>
<dbReference type="GeneID" id="14359"/>
<dbReference type="KEGG" id="mmu:14359"/>
<dbReference type="UCSC" id="uc008oxk.2">
    <molecule id="Q61584-2"/>
    <property type="organism name" value="mouse"/>
</dbReference>
<dbReference type="UCSC" id="uc008oxl.2">
    <molecule id="Q61584-5"/>
    <property type="organism name" value="mouse"/>
</dbReference>
<dbReference type="UCSC" id="uc008oxn.2">
    <molecule id="Q61584-1"/>
    <property type="organism name" value="mouse"/>
</dbReference>
<dbReference type="AGR" id="MGI:104860"/>
<dbReference type="CTD" id="8087"/>
<dbReference type="MGI" id="MGI:104860">
    <property type="gene designation" value="Fxr1"/>
</dbReference>
<dbReference type="VEuPathDB" id="HostDB:ENSMUSG00000027680"/>
<dbReference type="eggNOG" id="ENOG502QPKJ">
    <property type="taxonomic scope" value="Eukaryota"/>
</dbReference>
<dbReference type="GeneTree" id="ENSGT00950000183189"/>
<dbReference type="InParanoid" id="Q61584"/>
<dbReference type="OMA" id="WPARITK"/>
<dbReference type="OrthoDB" id="424249at2759"/>
<dbReference type="PhylomeDB" id="Q61584"/>
<dbReference type="TreeFam" id="TF105427"/>
<dbReference type="BioGRID-ORCS" id="14359">
    <property type="hits" value="0 hits in 78 CRISPR screens"/>
</dbReference>
<dbReference type="CD-CODE" id="0A37FC0B">
    <property type="entry name" value="FXR1 condensates"/>
</dbReference>
<dbReference type="CD-CODE" id="764D0258">
    <property type="entry name" value="Neuronal RNP granule"/>
</dbReference>
<dbReference type="CD-CODE" id="CE726F99">
    <property type="entry name" value="Postsynaptic density"/>
</dbReference>
<dbReference type="PRO" id="PR:Q61584"/>
<dbReference type="Proteomes" id="UP000000589">
    <property type="component" value="Chromosome 3"/>
</dbReference>
<dbReference type="RNAct" id="Q61584">
    <property type="molecule type" value="protein"/>
</dbReference>
<dbReference type="Bgee" id="ENSMUSG00000027680">
    <property type="expression patterns" value="Expressed in seminiferous tubule of testis and 256 other cell types or tissues"/>
</dbReference>
<dbReference type="ExpressionAtlas" id="Q61584">
    <property type="expression patterns" value="baseline and differential"/>
</dbReference>
<dbReference type="GO" id="GO:0030424">
    <property type="term" value="C:axon"/>
    <property type="evidence" value="ECO:0000314"/>
    <property type="project" value="MGI"/>
</dbReference>
<dbReference type="GO" id="GO:0043034">
    <property type="term" value="C:costamere"/>
    <property type="evidence" value="ECO:0000314"/>
    <property type="project" value="MGI"/>
</dbReference>
<dbReference type="GO" id="GO:0005737">
    <property type="term" value="C:cytoplasm"/>
    <property type="evidence" value="ECO:0000314"/>
    <property type="project" value="MGI"/>
</dbReference>
<dbReference type="GO" id="GO:0036464">
    <property type="term" value="C:cytoplasmic ribonucleoprotein granule"/>
    <property type="evidence" value="ECO:0000250"/>
    <property type="project" value="UniProtKB"/>
</dbReference>
<dbReference type="GO" id="GO:0010494">
    <property type="term" value="C:cytoplasmic stress granule"/>
    <property type="evidence" value="ECO:0007669"/>
    <property type="project" value="UniProtKB-SubCell"/>
</dbReference>
<dbReference type="GO" id="GO:0005829">
    <property type="term" value="C:cytosol"/>
    <property type="evidence" value="ECO:0000314"/>
    <property type="project" value="UniProtKB"/>
</dbReference>
<dbReference type="GO" id="GO:0030425">
    <property type="term" value="C:dendrite"/>
    <property type="evidence" value="ECO:0000314"/>
    <property type="project" value="MGI"/>
</dbReference>
<dbReference type="GO" id="GO:0043197">
    <property type="term" value="C:dendritic spine"/>
    <property type="evidence" value="ECO:0000314"/>
    <property type="project" value="MGI"/>
</dbReference>
<dbReference type="GO" id="GO:0098978">
    <property type="term" value="C:glutamatergic synapse"/>
    <property type="evidence" value="ECO:0000314"/>
    <property type="project" value="SynGO"/>
</dbReference>
<dbReference type="GO" id="GO:0043232">
    <property type="term" value="C:intracellular membraneless organelle"/>
    <property type="evidence" value="ECO:0000314"/>
    <property type="project" value="UniProtKB"/>
</dbReference>
<dbReference type="GO" id="GO:0005635">
    <property type="term" value="C:nuclear envelope"/>
    <property type="evidence" value="ECO:0000250"/>
    <property type="project" value="UniProtKB"/>
</dbReference>
<dbReference type="GO" id="GO:0005634">
    <property type="term" value="C:nucleus"/>
    <property type="evidence" value="ECO:0000314"/>
    <property type="project" value="MGI"/>
</dbReference>
<dbReference type="GO" id="GO:0048471">
    <property type="term" value="C:perinuclear region of cytoplasm"/>
    <property type="evidence" value="ECO:0000314"/>
    <property type="project" value="MGI"/>
</dbReference>
<dbReference type="GO" id="GO:0098794">
    <property type="term" value="C:postsynapse"/>
    <property type="evidence" value="ECO:0000314"/>
    <property type="project" value="SynGO"/>
</dbReference>
<dbReference type="GO" id="GO:0035770">
    <property type="term" value="C:ribonucleoprotein granule"/>
    <property type="evidence" value="ECO:0000314"/>
    <property type="project" value="MGI"/>
</dbReference>
<dbReference type="GO" id="GO:0005840">
    <property type="term" value="C:ribosome"/>
    <property type="evidence" value="ECO:0000314"/>
    <property type="project" value="MGI"/>
</dbReference>
<dbReference type="GO" id="GO:0002151">
    <property type="term" value="F:G-quadruplex RNA binding"/>
    <property type="evidence" value="ECO:0000314"/>
    <property type="project" value="MGI"/>
</dbReference>
<dbReference type="GO" id="GO:0140693">
    <property type="term" value="F:molecular condensate scaffold activity"/>
    <property type="evidence" value="ECO:0000314"/>
    <property type="project" value="UniProtKB"/>
</dbReference>
<dbReference type="GO" id="GO:0035925">
    <property type="term" value="F:mRNA 3'-UTR AU-rich region binding"/>
    <property type="evidence" value="ECO:0000314"/>
    <property type="project" value="UniProtKB"/>
</dbReference>
<dbReference type="GO" id="GO:0003730">
    <property type="term" value="F:mRNA 3'-UTR binding"/>
    <property type="evidence" value="ECO:0000314"/>
    <property type="project" value="MGI"/>
</dbReference>
<dbReference type="GO" id="GO:0003729">
    <property type="term" value="F:mRNA binding"/>
    <property type="evidence" value="ECO:0000314"/>
    <property type="project" value="UniProtKB"/>
</dbReference>
<dbReference type="GO" id="GO:0046982">
    <property type="term" value="F:protein heterodimerization activity"/>
    <property type="evidence" value="ECO:0000250"/>
    <property type="project" value="UniProtKB"/>
</dbReference>
<dbReference type="GO" id="GO:0042803">
    <property type="term" value="F:protein homodimerization activity"/>
    <property type="evidence" value="ECO:0000250"/>
    <property type="project" value="UniProtKB"/>
</dbReference>
<dbReference type="GO" id="GO:0043021">
    <property type="term" value="F:ribonucleoprotein complex binding"/>
    <property type="evidence" value="ECO:0000314"/>
    <property type="project" value="MGI"/>
</dbReference>
<dbReference type="GO" id="GO:0033592">
    <property type="term" value="F:RNA strand annealing activity"/>
    <property type="evidence" value="ECO:0000250"/>
    <property type="project" value="UniProtKB"/>
</dbReference>
<dbReference type="GO" id="GO:0021542">
    <property type="term" value="P:dentate gyrus development"/>
    <property type="evidence" value="ECO:0000315"/>
    <property type="project" value="UniProtKB"/>
</dbReference>
<dbReference type="GO" id="GO:0140694">
    <property type="term" value="P:membraneless organelle assembly"/>
    <property type="evidence" value="ECO:0000314"/>
    <property type="project" value="UniProtKB"/>
</dbReference>
<dbReference type="GO" id="GO:0061157">
    <property type="term" value="P:mRNA destabilization"/>
    <property type="evidence" value="ECO:0000250"/>
    <property type="project" value="UniProtKB"/>
</dbReference>
<dbReference type="GO" id="GO:0007517">
    <property type="term" value="P:muscle organ development"/>
    <property type="evidence" value="ECO:0000314"/>
    <property type="project" value="UniProtKB"/>
</dbReference>
<dbReference type="GO" id="GO:0050728">
    <property type="term" value="P:negative regulation of inflammatory response"/>
    <property type="evidence" value="ECO:0000250"/>
    <property type="project" value="UniProtKB"/>
</dbReference>
<dbReference type="GO" id="GO:1900272">
    <property type="term" value="P:negative regulation of long-term synaptic potentiation"/>
    <property type="evidence" value="ECO:0000315"/>
    <property type="project" value="UniProtKB"/>
</dbReference>
<dbReference type="GO" id="GO:1902373">
    <property type="term" value="P:negative regulation of mRNA catabolic process"/>
    <property type="evidence" value="ECO:0007669"/>
    <property type="project" value="Ensembl"/>
</dbReference>
<dbReference type="GO" id="GO:0017148">
    <property type="term" value="P:negative regulation of translation"/>
    <property type="evidence" value="ECO:0000314"/>
    <property type="project" value="MGI"/>
</dbReference>
<dbReference type="GO" id="GO:0032720">
    <property type="term" value="P:negative regulation of tumor necrosis factor production"/>
    <property type="evidence" value="ECO:0000314"/>
    <property type="project" value="UniProtKB"/>
</dbReference>
<dbReference type="GO" id="GO:0051292">
    <property type="term" value="P:nuclear pore complex assembly"/>
    <property type="evidence" value="ECO:0000250"/>
    <property type="project" value="UniProtKB"/>
</dbReference>
<dbReference type="GO" id="GO:0051664">
    <property type="term" value="P:nuclear pore localization"/>
    <property type="evidence" value="ECO:0000250"/>
    <property type="project" value="UniProtKB"/>
</dbReference>
<dbReference type="GO" id="GO:2000637">
    <property type="term" value="P:positive regulation of miRNA-mediated gene silencing"/>
    <property type="evidence" value="ECO:0000250"/>
    <property type="project" value="UniProtKB"/>
</dbReference>
<dbReference type="GO" id="GO:0035025">
    <property type="term" value="P:positive regulation of Rho protein signal transduction"/>
    <property type="evidence" value="ECO:0007669"/>
    <property type="project" value="Ensembl"/>
</dbReference>
<dbReference type="GO" id="GO:0045727">
    <property type="term" value="P:positive regulation of translation"/>
    <property type="evidence" value="ECO:0000314"/>
    <property type="project" value="UniProtKB"/>
</dbReference>
<dbReference type="GO" id="GO:0010608">
    <property type="term" value="P:post-transcriptional regulation of gene expression"/>
    <property type="evidence" value="ECO:0000314"/>
    <property type="project" value="UniProtKB"/>
</dbReference>
<dbReference type="GO" id="GO:0045187">
    <property type="term" value="P:regulation of circadian sleep/wake cycle, sleep"/>
    <property type="evidence" value="ECO:0000315"/>
    <property type="project" value="UniProtKB"/>
</dbReference>
<dbReference type="GO" id="GO:0050767">
    <property type="term" value="P:regulation of neurogenesis"/>
    <property type="evidence" value="ECO:0000314"/>
    <property type="project" value="UniProtKB"/>
</dbReference>
<dbReference type="GO" id="GO:0051966">
    <property type="term" value="P:regulation of synaptic transmission, glutamatergic"/>
    <property type="evidence" value="ECO:0000315"/>
    <property type="project" value="UniProtKB"/>
</dbReference>
<dbReference type="GO" id="GO:0060538">
    <property type="term" value="P:skeletal muscle organ development"/>
    <property type="evidence" value="ECO:0000314"/>
    <property type="project" value="UniProtKB"/>
</dbReference>
<dbReference type="GO" id="GO:0007286">
    <property type="term" value="P:spermatid development"/>
    <property type="evidence" value="ECO:0000314"/>
    <property type="project" value="UniProtKB"/>
</dbReference>
<dbReference type="CDD" id="cd22504">
    <property type="entry name" value="KH_I_FXR1_rpt1"/>
    <property type="match status" value="1"/>
</dbReference>
<dbReference type="CDD" id="cd22507">
    <property type="entry name" value="KH_I_FXR1_rpt2"/>
    <property type="match status" value="1"/>
</dbReference>
<dbReference type="CDD" id="cd22510">
    <property type="entry name" value="KH_I_FXR1_rpt3"/>
    <property type="match status" value="1"/>
</dbReference>
<dbReference type="CDD" id="cd20472">
    <property type="entry name" value="Tudor_Agenet_FXR1_rpt1"/>
    <property type="match status" value="1"/>
</dbReference>
<dbReference type="CDD" id="cd20475">
    <property type="entry name" value="Tudor_Agenet_FXR1_rpt2"/>
    <property type="match status" value="1"/>
</dbReference>
<dbReference type="FunFam" id="2.30.30.140:FF:000001">
    <property type="entry name" value="Fragile X mental retardation 1, isoform CRA_e"/>
    <property type="match status" value="1"/>
</dbReference>
<dbReference type="FunFam" id="2.30.30.140:FF:000002">
    <property type="entry name" value="Fragile X mental retardation 1, isoform CRA_e"/>
    <property type="match status" value="1"/>
</dbReference>
<dbReference type="FunFam" id="3.30.1370.10:FF:000004">
    <property type="entry name" value="Fragile X mental retardation 1, isoform CRA_e"/>
    <property type="match status" value="1"/>
</dbReference>
<dbReference type="FunFam" id="3.30.1370.10:FF:000017">
    <property type="entry name" value="Fragile X mental retardation syndrome-related protein 1"/>
    <property type="match status" value="1"/>
</dbReference>
<dbReference type="Gene3D" id="2.30.30.140">
    <property type="match status" value="2"/>
</dbReference>
<dbReference type="Gene3D" id="3.30.1370.10">
    <property type="entry name" value="K Homology domain, type 1"/>
    <property type="match status" value="2"/>
</dbReference>
<dbReference type="InterPro" id="IPR008395">
    <property type="entry name" value="Agenet-like_dom"/>
</dbReference>
<dbReference type="InterPro" id="IPR040148">
    <property type="entry name" value="FMR1"/>
</dbReference>
<dbReference type="InterPro" id="IPR022034">
    <property type="entry name" value="FMR1-like_C_core"/>
</dbReference>
<dbReference type="InterPro" id="IPR040472">
    <property type="entry name" value="FMRP_KH0"/>
</dbReference>
<dbReference type="InterPro" id="IPR032172">
    <property type="entry name" value="FXR1_C1"/>
</dbReference>
<dbReference type="InterPro" id="IPR032177">
    <property type="entry name" value="FXR_C3"/>
</dbReference>
<dbReference type="InterPro" id="IPR004087">
    <property type="entry name" value="KH_dom"/>
</dbReference>
<dbReference type="InterPro" id="IPR004088">
    <property type="entry name" value="KH_dom_type_1"/>
</dbReference>
<dbReference type="InterPro" id="IPR036612">
    <property type="entry name" value="KH_dom_type_1_sf"/>
</dbReference>
<dbReference type="InterPro" id="IPR047494">
    <property type="entry name" value="KH_I_FXR1_rpt1"/>
</dbReference>
<dbReference type="InterPro" id="IPR047495">
    <property type="entry name" value="KH_I_FXR1_rpt2"/>
</dbReference>
<dbReference type="InterPro" id="IPR047496">
    <property type="entry name" value="KH_I_FXR1_rpt3"/>
</dbReference>
<dbReference type="InterPro" id="IPR047425">
    <property type="entry name" value="Tudor_Agenet_FXR1_rpt1"/>
</dbReference>
<dbReference type="InterPro" id="IPR047427">
    <property type="entry name" value="Tudor_Agenet_FXR1_rpt2"/>
</dbReference>
<dbReference type="InterPro" id="IPR041560">
    <property type="entry name" value="Tudor_FRM1"/>
</dbReference>
<dbReference type="PANTHER" id="PTHR10603">
    <property type="entry name" value="FRAGILE X MENTAL RETARDATION SYNDROME-RELATED PROTEIN"/>
    <property type="match status" value="1"/>
</dbReference>
<dbReference type="PANTHER" id="PTHR10603:SF6">
    <property type="entry name" value="RNA-BINDING PROTEIN FXR1"/>
    <property type="match status" value="1"/>
</dbReference>
<dbReference type="Pfam" id="PF05641">
    <property type="entry name" value="Agenet"/>
    <property type="match status" value="1"/>
</dbReference>
<dbReference type="Pfam" id="PF12235">
    <property type="entry name" value="FXMRP1_C_core"/>
    <property type="match status" value="1"/>
</dbReference>
<dbReference type="Pfam" id="PF16096">
    <property type="entry name" value="FXR_C1"/>
    <property type="match status" value="1"/>
</dbReference>
<dbReference type="Pfam" id="PF16097">
    <property type="entry name" value="FXR_C3"/>
    <property type="match status" value="1"/>
</dbReference>
<dbReference type="Pfam" id="PF00013">
    <property type="entry name" value="KH_1"/>
    <property type="match status" value="2"/>
</dbReference>
<dbReference type="Pfam" id="PF17904">
    <property type="entry name" value="KH_9"/>
    <property type="match status" value="1"/>
</dbReference>
<dbReference type="Pfam" id="PF18336">
    <property type="entry name" value="Tudor_FRX1"/>
    <property type="match status" value="1"/>
</dbReference>
<dbReference type="SMART" id="SM00322">
    <property type="entry name" value="KH"/>
    <property type="match status" value="2"/>
</dbReference>
<dbReference type="SUPFAM" id="SSF54791">
    <property type="entry name" value="Eukaryotic type KH-domain (KH-domain type I)"/>
    <property type="match status" value="2"/>
</dbReference>
<dbReference type="PROSITE" id="PS51641">
    <property type="entry name" value="AGENET_LIKE"/>
    <property type="match status" value="2"/>
</dbReference>
<dbReference type="PROSITE" id="PS50084">
    <property type="entry name" value="KH_TYPE_1"/>
    <property type="match status" value="2"/>
</dbReference>
<proteinExistence type="evidence at protein level"/>
<accession>Q61584</accession>
<accession>Q8VCU4</accession>
<accession>Q9R1E2</accession>
<accession>Q9R1E3</accession>
<accession>Q9R1E4</accession>
<accession>Q9R1E5</accession>
<accession>Q9WUA7</accession>
<accession>Q9WUA8</accession>
<accession>Q9WUA9</accession>
<organism>
    <name type="scientific">Mus musculus</name>
    <name type="common">Mouse</name>
    <dbReference type="NCBI Taxonomy" id="10090"/>
    <lineage>
        <taxon>Eukaryota</taxon>
        <taxon>Metazoa</taxon>
        <taxon>Chordata</taxon>
        <taxon>Craniata</taxon>
        <taxon>Vertebrata</taxon>
        <taxon>Euteleostomi</taxon>
        <taxon>Mammalia</taxon>
        <taxon>Eutheria</taxon>
        <taxon>Euarchontoglires</taxon>
        <taxon>Glires</taxon>
        <taxon>Rodentia</taxon>
        <taxon>Myomorpha</taxon>
        <taxon>Muroidea</taxon>
        <taxon>Muridae</taxon>
        <taxon>Murinae</taxon>
        <taxon>Mus</taxon>
        <taxon>Mus</taxon>
    </lineage>
</organism>
<evidence type="ECO:0000250" key="1">
    <source>
        <dbReference type="UniProtKB" id="P35922"/>
    </source>
</evidence>
<evidence type="ECO:0000250" key="2">
    <source>
        <dbReference type="UniProtKB" id="P51114"/>
    </source>
</evidence>
<evidence type="ECO:0000250" key="3">
    <source>
        <dbReference type="UniProtKB" id="P51116"/>
    </source>
</evidence>
<evidence type="ECO:0000250" key="4">
    <source>
        <dbReference type="UniProtKB" id="Q5XI81"/>
    </source>
</evidence>
<evidence type="ECO:0000255" key="5">
    <source>
        <dbReference type="PROSITE-ProRule" id="PRU00117"/>
    </source>
</evidence>
<evidence type="ECO:0000255" key="6">
    <source>
        <dbReference type="PROSITE-ProRule" id="PRU00973"/>
    </source>
</evidence>
<evidence type="ECO:0000256" key="7">
    <source>
        <dbReference type="SAM" id="MobiDB-lite"/>
    </source>
</evidence>
<evidence type="ECO:0000269" key="8">
    <source>
    </source>
</evidence>
<evidence type="ECO:0000269" key="9">
    <source>
    </source>
</evidence>
<evidence type="ECO:0000269" key="10">
    <source>
    </source>
</evidence>
<evidence type="ECO:0000269" key="11">
    <source>
    </source>
</evidence>
<evidence type="ECO:0000269" key="12">
    <source>
    </source>
</evidence>
<evidence type="ECO:0000269" key="13">
    <source>
    </source>
</evidence>
<evidence type="ECO:0000269" key="14">
    <source>
    </source>
</evidence>
<evidence type="ECO:0000269" key="15">
    <source>
    </source>
</evidence>
<evidence type="ECO:0000269" key="16">
    <source>
    </source>
</evidence>
<evidence type="ECO:0000269" key="17">
    <source>
    </source>
</evidence>
<evidence type="ECO:0000269" key="18">
    <source>
    </source>
</evidence>
<evidence type="ECO:0000269" key="19">
    <source>
    </source>
</evidence>
<evidence type="ECO:0000269" key="20">
    <source>
    </source>
</evidence>
<evidence type="ECO:0000269" key="21">
    <source>
    </source>
</evidence>
<evidence type="ECO:0000269" key="22">
    <source>
    </source>
</evidence>
<evidence type="ECO:0000303" key="23">
    <source>
    </source>
</evidence>
<evidence type="ECO:0000303" key="24">
    <source>
    </source>
</evidence>
<evidence type="ECO:0000303" key="25">
    <source>
    </source>
</evidence>
<evidence type="ECO:0000303" key="26">
    <source>
    </source>
</evidence>
<evidence type="ECO:0000303" key="27">
    <source>
    </source>
</evidence>
<evidence type="ECO:0000305" key="28"/>
<evidence type="ECO:0000305" key="29">
    <source>
    </source>
</evidence>
<evidence type="ECO:0000312" key="30">
    <source>
        <dbReference type="MGI" id="MGI:104860"/>
    </source>
</evidence>
<evidence type="ECO:0007744" key="31">
    <source>
    </source>
</evidence>
<evidence type="ECO:0007744" key="32">
    <source>
    </source>
</evidence>
<evidence type="ECO:0007744" key="33">
    <source>
    </source>
</evidence>
<reference key="1">
    <citation type="journal article" date="1995" name="Hum. Mol. Genet.">
        <title>Highly conserved 3' UTR and expression pattern of FXR1 points to a divergent gene regulation of FXR1 and FMR1.</title>
        <authorList>
            <person name="Coy J.F."/>
            <person name="Sedlacek Z."/>
            <person name="Baechner D."/>
            <person name="Hameister H."/>
            <person name="Joos S."/>
            <person name="Lichter P."/>
            <person name="Delius H."/>
            <person name="Poustka A."/>
        </authorList>
    </citation>
    <scope>NUCLEOTIDE SEQUENCE [MRNA] (ISOFORM A)</scope>
    <source>
        <tissue>Fetal brain</tissue>
    </source>
</reference>
<reference key="2">
    <citation type="journal article" date="1999" name="Genomics">
        <title>Alternative splicing in the murine and human FXR1 genes.</title>
        <authorList>
            <person name="Kirkpatrick L.L."/>
            <person name="McIlwain K.A."/>
            <person name="Nelson D.L."/>
        </authorList>
    </citation>
    <scope>NUCLEOTIDE SEQUENCE [GENOMIC DNA / MRNA] (ISOFORMS A; B; C; D; E; F AND G)</scope>
    <scope>TISSUE SPECIFICITY</scope>
</reference>
<reference key="3">
    <citation type="journal article" date="2004" name="Genome Res.">
        <title>The status, quality, and expansion of the NIH full-length cDNA project: the Mammalian Gene Collection (MGC).</title>
        <authorList>
            <consortium name="The MGC Project Team"/>
        </authorList>
    </citation>
    <scope>NUCLEOTIDE SEQUENCE [LARGE SCALE MRNA] (ISOFORM A)</scope>
    <source>
        <tissue>Kidney</tissue>
    </source>
</reference>
<reference key="4">
    <citation type="journal article" date="2001" name="Proc. Natl. Acad. Sci. U.S.A.">
        <title>A highly conserved protein family interacting with the fragile X mental retardation protein (FMRP) and displaying selective interactions with FMRP-related proteins FXR1P and FXR2P.</title>
        <authorList>
            <person name="Schenck A."/>
            <person name="Bardoni B."/>
            <person name="Moro A."/>
            <person name="Bagni C."/>
            <person name="Mandel J.-L."/>
        </authorList>
    </citation>
    <scope>INTERACTION WITH CYFIP2</scope>
</reference>
<reference key="5">
    <citation type="journal article" date="2004" name="Hum. Mol. Genet.">
        <title>Fxr1 knockout mice show a striated muscle phenotype: implications for Fxr1p function in vivo.</title>
        <authorList>
            <person name="Mientjes E.J."/>
            <person name="Willemsen R."/>
            <person name="Kirkpatrick L.L."/>
            <person name="Nieuwenhuizen I.M."/>
            <person name="Hoogeveen-Westerveld M."/>
            <person name="Verweij M."/>
            <person name="Reis S."/>
            <person name="Bardoni B."/>
            <person name="Hoogeveen A.T."/>
            <person name="Oostra B.A."/>
            <person name="Nelson D.L."/>
        </authorList>
    </citation>
    <scope>FUNCTION</scope>
    <scope>DISRUPTION PHENOTYPE</scope>
</reference>
<reference key="6">
    <citation type="journal article" date="2005" name="J. Biol. Chem.">
        <title>Fragile X-related protein FXR1P regulates proinflammatory cytokine tumor necrosis factor expression at the post-transcriptional level.</title>
        <authorList>
            <person name="Garnon J."/>
            <person name="Lachance C."/>
            <person name="Di Marco S."/>
            <person name="Hel Z."/>
            <person name="Marion D."/>
            <person name="Ruiz M.C."/>
            <person name="Newkirk M.M."/>
            <person name="Khandjian E.W."/>
            <person name="Radzioch D."/>
        </authorList>
    </citation>
    <scope>FUNCTION</scope>
    <scope>DISRUPTION PHENOTYPE</scope>
</reference>
<reference key="7">
    <citation type="journal article" date="2005" name="Mol. Biol. Cell">
        <title>The RNA-binding protein Fragile X-related 1 regulates somite formation in Xenopus laevis.</title>
        <authorList>
            <person name="Huot M.-E."/>
            <person name="Bisson N."/>
            <person name="Davidovic L."/>
            <person name="Mazroui R."/>
            <person name="Labelle Y."/>
            <person name="Moss T."/>
            <person name="Khandjian E.W."/>
        </authorList>
    </citation>
    <scope>TISSUE SPECIFICITY</scope>
</reference>
<reference key="8">
    <citation type="journal article" date="2005" name="Nat. Biotechnol.">
        <title>Immunoaffinity profiling of tyrosine phosphorylation in cancer cells.</title>
        <authorList>
            <person name="Rush J."/>
            <person name="Moritz A."/>
            <person name="Lee K.A."/>
            <person name="Guo A."/>
            <person name="Goss V.L."/>
            <person name="Spek E.J."/>
            <person name="Zhang H."/>
            <person name="Zha X.-M."/>
            <person name="Polakiewicz R.D."/>
            <person name="Comb M.J."/>
        </authorList>
    </citation>
    <scope>IDENTIFICATION BY MASS SPECTROMETRY [LARGE SCALE ANALYSIS]</scope>
</reference>
<reference key="9">
    <citation type="journal article" date="2006" name="Mol. Cell. Proteomics">
        <title>Comprehensive identification of phosphorylation sites in postsynaptic density preparations.</title>
        <authorList>
            <person name="Trinidad J.C."/>
            <person name="Specht C.G."/>
            <person name="Thalhammer A."/>
            <person name="Schoepfer R."/>
            <person name="Burlingame A.L."/>
        </authorList>
    </citation>
    <scope>IDENTIFICATION BY MASS SPECTROMETRY [LARGE SCALE ANALYSIS]</scope>
    <source>
        <tissue>Brain</tissue>
    </source>
</reference>
<reference key="10">
    <citation type="journal article" date="2007" name="J. Immunol.">
        <title>Quantitative time-resolved phosphoproteomic analysis of mast cell signaling.</title>
        <authorList>
            <person name="Cao L."/>
            <person name="Yu K."/>
            <person name="Banh C."/>
            <person name="Nguyen V."/>
            <person name="Ritz A."/>
            <person name="Raphael B.J."/>
            <person name="Kawakami Y."/>
            <person name="Kawakami T."/>
            <person name="Salomon A.R."/>
        </authorList>
    </citation>
    <scope>PHOSPHORYLATION [LARGE SCALE ANALYSIS] AT TYR-68</scope>
    <scope>IDENTIFICATION BY MASS SPECTROMETRY [LARGE SCALE ANALYSIS]</scope>
    <source>
        <tissue>Mast cell</tissue>
    </source>
</reference>
<reference key="11">
    <citation type="journal article" date="2007" name="Proc. Natl. Acad. Sci. U.S.A.">
        <title>Large-scale phosphorylation analysis of mouse liver.</title>
        <authorList>
            <person name="Villen J."/>
            <person name="Beausoleil S.A."/>
            <person name="Gerber S.A."/>
            <person name="Gygi S.P."/>
        </authorList>
    </citation>
    <scope>PHOSPHORYLATION [LARGE SCALE ANALYSIS] AT SER-435 AND SER-449</scope>
    <scope>IDENTIFICATION BY MASS SPECTROMETRY [LARGE SCALE ANALYSIS]</scope>
    <source>
        <tissue>Liver</tissue>
    </source>
</reference>
<reference key="12">
    <citation type="journal article" date="2010" name="Cell">
        <title>A tissue-specific atlas of mouse protein phosphorylation and expression.</title>
        <authorList>
            <person name="Huttlin E.L."/>
            <person name="Jedrychowski M.P."/>
            <person name="Elias J.E."/>
            <person name="Goswami T."/>
            <person name="Rad R."/>
            <person name="Beausoleil S.A."/>
            <person name="Villen J."/>
            <person name="Haas W."/>
            <person name="Sowa M.E."/>
            <person name="Gygi S.P."/>
        </authorList>
    </citation>
    <scope>PHOSPHORYLATION [LARGE SCALE ANALYSIS] AT SER-435; SER-438; THR-512 AND SER-643</scope>
    <scope>IDENTIFICATION BY MASS SPECTROMETRY [LARGE SCALE ANALYSIS]</scope>
    <source>
        <tissue>Brain</tissue>
        <tissue>Brown adipose tissue</tissue>
        <tissue>Heart</tissue>
        <tissue>Kidney</tissue>
        <tissue>Liver</tissue>
        <tissue>Lung</tissue>
        <tissue>Pancreas</tissue>
        <tissue>Spleen</tissue>
        <tissue>Testis</tissue>
    </source>
</reference>
<reference key="13">
    <citation type="journal article" date="2011" name="PLoS ONE">
        <title>Fragile X related protein 1 clusters with ribosomes and messenger RNAs at a subset of dendritic spines in the mouse hippocampus.</title>
        <authorList>
            <person name="Cook D."/>
            <person name="Sanchez-Carbente M.D.E.L.R."/>
            <person name="Lachance C."/>
            <person name="Radzioch D."/>
            <person name="Tremblay S."/>
            <person name="Khandjian E.W."/>
            <person name="DesGroseillers L."/>
            <person name="Murai K.K."/>
        </authorList>
    </citation>
    <scope>SUBCELLULAR LOCATION</scope>
    <scope>TISSUE SPECIFICITY</scope>
</reference>
<reference key="14">
    <citation type="journal article" date="2014" name="Cell Rep.">
        <title>FXR1P limits long-term memory, long-lasting synaptic potentiation, and de novo GluA2 translation.</title>
        <authorList>
            <person name="Cook D."/>
            <person name="Nuro E."/>
            <person name="Jones E.V."/>
            <person name="Altimimi H.F."/>
            <person name="Farmer W.T."/>
            <person name="Gandin V."/>
            <person name="Hanna E."/>
            <person name="Zong R."/>
            <person name="Barbon A."/>
            <person name="Nelson D.L."/>
            <person name="Topisirovic I."/>
            <person name="Rochford J."/>
            <person name="Stellwagen D."/>
            <person name="Beique J.C."/>
            <person name="Murai K.K."/>
        </authorList>
    </citation>
    <scope>FUNCTION</scope>
    <scope>DISRUPTION PHENOTYPE</scope>
</reference>
<reference key="15">
    <citation type="journal article" date="2015" name="Proc. Natl. Acad. Sci. U.S.A.">
        <title>FXR1P is a GSK3beta substrate regulating mood and emotion processing.</title>
        <authorList>
            <person name="Del'Guidice T."/>
            <person name="Latapy C."/>
            <person name="Rampino A."/>
            <person name="Khlghatyan J."/>
            <person name="Lemasson M."/>
            <person name="Gelao B."/>
            <person name="Quarto T."/>
            <person name="Rizzo G."/>
            <person name="Barbeau A."/>
            <person name="Lamarre C."/>
            <person name="Bertolino A."/>
            <person name="Blasi G."/>
            <person name="Beaulieu J.M."/>
        </authorList>
    </citation>
    <scope>PHOSPHORYLATION</scope>
    <scope>DEGRADATION</scope>
    <scope>MUTAGENESIS OF SER-409; SER-426; SER-438; SER-492; SER-503; SER-525; THR-551; SER-553 AND SER-598</scope>
</reference>
<reference key="16">
    <citation type="journal article" date="2016" name="Elife">
        <title>Sub-synaptic, multiplexed analysis of proteins reveals Fragile X related protein 2 is mislocalized in Fmr1 KO synapses.</title>
        <authorList>
            <person name="Wang G.X."/>
            <person name="Smith S.J."/>
            <person name="Mourrain P."/>
        </authorList>
    </citation>
    <scope>SUBCELLULAR LOCATION</scope>
</reference>
<reference key="17">
    <citation type="journal article" date="2017" name="Hum. Mol. Genet.">
        <title>Fragile X related protein 1 (FXR1P) regulates proliferation of adult neural stem cells.</title>
        <authorList>
            <person name="Patzlaff N.E."/>
            <person name="Nemec K.M."/>
            <person name="Malone S.G."/>
            <person name="Li Y."/>
            <person name="Zhao X."/>
        </authorList>
    </citation>
    <scope>FUNCTION</scope>
    <scope>DISRUPTION PHENOTYPE</scope>
    <scope>TISSUE SPECIFICITY</scope>
</reference>
<reference key="18">
    <citation type="journal article" date="2017" name="Nat. Commun.">
        <title>Fbxo4-mediated degradation of Fxr1 suppresses tumorigenesis in head and neck squamous cell carcinoma.</title>
        <authorList>
            <person name="Qie S."/>
            <person name="Majumder M."/>
            <person name="Mackiewicz K."/>
            <person name="Howley B.V."/>
            <person name="Peterson Y.K."/>
            <person name="Howe P.H."/>
            <person name="Palanisamy V."/>
            <person name="Diehl J.A."/>
        </authorList>
    </citation>
    <scope>PHOSPHORYLATION</scope>
    <scope>UBIQUITINATION</scope>
</reference>
<reference key="19">
    <citation type="journal article" date="2019" name="Nat. Commun.">
        <title>Recessive mutations in muscle-specific isoforms of FXR1 cause congenital multi-minicore myopathy.</title>
        <authorList>
            <person name="Estan M.C."/>
            <person name="Fernandez-Nunez E."/>
            <person name="Zaki M.S."/>
            <person name="Esteban M.I."/>
            <person name="Donkervoort S."/>
            <person name="Hawkins C."/>
            <person name="Caparros-Martin J.A."/>
            <person name="Saade D."/>
            <person name="Hu Y."/>
            <person name="Bolduc V."/>
            <person name="Chao K.R."/>
            <person name="Nevado J."/>
            <person name="Lamuedra A."/>
            <person name="Largo R."/>
            <person name="Herrero-Beaumont G."/>
            <person name="Regadera J."/>
            <person name="Hernandez-Chico C."/>
            <person name="Tizzano E.F."/>
            <person name="Martinez-Glez V."/>
            <person name="Carvajal J.J."/>
            <person name="Zong R."/>
            <person name="Nelson D.L."/>
            <person name="Otaify G.A."/>
            <person name="Temtamy S."/>
            <person name="Aglan M."/>
            <person name="Issa M."/>
            <person name="Boennemann C.G."/>
            <person name="Lapunzina P."/>
            <person name="Yoon G."/>
            <person name="Ruiz-Perez V.L."/>
        </authorList>
    </citation>
    <scope>SUBCELLULAR LOCATION</scope>
</reference>
<reference key="20">
    <citation type="journal article" date="2020" name="EMBO J.">
        <title>Fxr1 regulates sleep and synaptic homeostasis.</title>
        <authorList>
            <person name="Khlghatyan J."/>
            <person name="Evstratova A."/>
            <person name="Bozoyan L."/>
            <person name="Chamberland S."/>
            <person name="Chatterjee D."/>
            <person name="Marakhovskaia A."/>
            <person name="Soares Silva T."/>
            <person name="Toth K."/>
            <person name="Mongrain V."/>
            <person name="Beaulieu J.M."/>
        </authorList>
    </citation>
    <scope>FUNCTION</scope>
    <scope>PHOSPHORYLATION</scope>
    <scope>UBIQUITINATION</scope>
</reference>
<reference key="21">
    <citation type="journal article" date="2020" name="J. Cell Biol.">
        <title>FXR1 splicing is important for muscle development and biomolecular condensates in muscle cells.</title>
        <authorList>
            <person name="Smith J.A."/>
            <person name="Curry E.G."/>
            <person name="Blue R.E."/>
            <person name="Roden C."/>
            <person name="Dundon S.E.R."/>
            <person name="Rodriguez-Vargas A."/>
            <person name="Jordan D.C."/>
            <person name="Chen X."/>
            <person name="Lyons S.M."/>
            <person name="Crutchley J."/>
            <person name="Anderson P."/>
            <person name="Horb M.E."/>
            <person name="Gladfelter A.S."/>
            <person name="Giudice J."/>
        </authorList>
    </citation>
    <scope>FUNCTION</scope>
    <scope>TISSUE SPECIFICITY</scope>
</reference>
<reference key="22">
    <citation type="journal article" date="2022" name="Science">
        <title>LLPS of FXR1 drives spermiogenesis by activating translation of stored mRNAs.</title>
        <authorList>
            <person name="Kang J.Y."/>
            <person name="Wen Z."/>
            <person name="Pan D."/>
            <person name="Zhang Y."/>
            <person name="Li Q."/>
            <person name="Zhong A."/>
            <person name="Yu X."/>
            <person name="Wu Y.C."/>
            <person name="Chen Y."/>
            <person name="Zhang X."/>
            <person name="Kou P.C."/>
            <person name="Geng J."/>
            <person name="Wang Y.Y."/>
            <person name="Hua M.M."/>
            <person name="Zong R."/>
            <person name="Li B."/>
            <person name="Shi H.J."/>
            <person name="Li D."/>
            <person name="Fu X.D."/>
            <person name="Li J."/>
            <person name="Nelson D.L."/>
            <person name="Guo X."/>
            <person name="Zhou Y."/>
            <person name="Gou L.T."/>
            <person name="Huang Y."/>
            <person name="Liu M.F."/>
        </authorList>
    </citation>
    <scope>FUNCTION</scope>
    <scope>SUBCELLULAR LOCATION</scope>
    <scope>TISSUE SPECIFICITY</scope>
    <scope>DOMAIN</scope>
    <scope>INTERACTION WITH EIF4G3</scope>
    <scope>MUTAGENESIS OF LEU-351</scope>
</reference>
<comment type="function">
    <text evidence="2 10 11 14 17 20 21 22">mRNA-binding protein that acts as a regulator of mRNAs translation and/or stability, and which is required for various processes, such as neurogenesis, muscle development and spermatogenesis (PubMed:15128702, PubMed:25456134, PubMed:32328638, PubMed:35951695). Specifically binds to AU-rich elements (AREs) in the 3'-UTR of target mRNAs (PubMed:25456134). Promotes formation of some phase-separated membraneless compartment by undergoing liquid-liquid phase separation upon binding to AREs-containing mRNAs, leading to assemble mRNAs into cytoplasmic ribonucleoprotein granules that concentrate mRNAs with associated regulatory factors (PubMed:32328638, PubMed:35951695). Required to activate translation of stored mRNAs during late spermatogenesis: acts by undergoing liquid-liquid phase separation to assemble target mRNAs into cytoplasmic ribonucleoprotein granules that recruit translation initiation factor EIF4G3 to activate translation of stored mRNAs in late spermatids (PubMed:35951695). Promotes translation of MYC transcripts by recruiting the eIF4F complex to the translation start site (By similarity). Acts as a negative regulator of inflammation in response to IL19 by promoting destabilization of pro-inflammatory transcripts (By similarity). Also acts as an inhibitor of inflammation by binding to TNF mRNA, decreasing TNF protein production (PubMed:15548538). Acts as a negative regulator of AMPA receptor GRIA2/GluA2 synthesis during long-lasting synaptic potentiation of hippocampal neurons by binding to GRIA2/GluA2 mRNA, thereby inhibiting its translation (PubMed:25456134). Regulates proliferation of adult neural stem cells by binding to CDKN1A mRNA and promoting its expression (PubMed:28204491). Acts as a regulator of sleep and synaptic homeostasis by regulating translation of transcripts in neurons (PubMed:32893934). Required for embryonic and postnatal development of muscle tissue by undergoing liquid-liquid phase separation to assemble target mRNAs into cytoplasmic ribonucleoprotein granules (PubMed:15128702, PubMed:32328638). Involved in the nuclear pore complex localization to the nuclear envelope by preventing cytoplasmic aggregation of nucleoporins: acts by preventing ectopic phase separation of nucleoporins in the cytoplasm via a microtubule-dependent mechanism (By similarity). Plays a role in the stabilization of PKP2 mRNA and therefore protein abundance, via its interaction with PKP3 (By similarity). May also do the same for PKP2, PKP3 and DSP via its interaction with PKP1 (By similarity). Forms a cytoplasmic messenger ribonucleoprotein (mRNP) network by packaging long mRNAs, serving as a scaffold that recruits proteins and signaling molecules. This network facilitates signaling reactions by maintaining proximity between kinases and substrates, crucial for processes like actomyosin reorganization (By similarity).</text>
</comment>
<comment type="subunit">
    <text evidence="2 9 22">Homodimer (via CC domains); homodiremization is required for FXR1-network nucleation (By similarity). Interacts with FMR1 (By similarity). Interacts with FRX2 (By similarity). Interacts with TDRD3 (By similarity). Interacts with HABP4 (By similarity). Interacts with CYFIP2 but not with CYFIP1 (PubMed:11438699). Interacts with EIF4G3; promoting translation of target mRNAs (PubMed:35951695). Interacts with ELAVL1 (By similarity). Interacts with CEP63; inhibiting 'Lys-63'-linked ubiquitination (By similarity). Interacts with PKP3; the interaction facilitates the binding of PKP3 to PKP2 mRNA (By similarity). Interacts with PKP1; the interaction may facilitate the binding of PKP1 to PKP2, PKP3 and DSP mRNA (By similarity).</text>
</comment>
<comment type="subcellular location">
    <subcellularLocation>
        <location evidence="13 22">Cytoplasm</location>
        <location evidence="13 22">Cytoplasmic ribonucleoprotein granule</location>
    </subcellularLocation>
    <subcellularLocation>
        <location evidence="2">Cytoplasm</location>
        <location evidence="2">Stress granule</location>
    </subcellularLocation>
    <subcellularLocation>
        <location evidence="29">Cytoplasm</location>
    </subcellularLocation>
    <subcellularLocation>
        <location evidence="13">Cell projection</location>
        <location evidence="13">Dendrite</location>
    </subcellularLocation>
    <subcellularLocation>
        <location evidence="13">Cell projection</location>
        <location evidence="13">Dendritic spine</location>
    </subcellularLocation>
    <subcellularLocation>
        <location evidence="13">Cell projection</location>
        <location evidence="13">Axon</location>
    </subcellularLocation>
    <subcellularLocation>
        <location evidence="2">Nucleus envelope</location>
    </subcellularLocation>
    <subcellularLocation>
        <location evidence="16">Postsynapse</location>
    </subcellularLocation>
    <text evidence="2 19 22">Specifically localizes to cytoplasmic ribonucleoprotein membraneless compartments (PubMed:35951695). Localizes to stress granules following phosphorylation at Ser-449 by PAK1 (By similarity). Adjacent to Z-lines in muscles (PubMed:30770808).</text>
</comment>
<comment type="alternative products">
    <event type="alternative splicing"/>
    <isoform>
        <id>Q61584-1</id>
        <name>E</name>
        <sequence type="displayed"/>
    </isoform>
    <isoform>
        <id>Q61584-2</id>
        <name>A</name>
        <sequence type="described" ref="VSP_002836 VSP_002838 VSP_002840"/>
    </isoform>
    <isoform>
        <id>Q61584-3</id>
        <name>B</name>
        <sequence type="described" ref="VSP_002838"/>
    </isoform>
    <isoform>
        <id>Q61584-4</id>
        <name>C</name>
        <sequence type="described" ref="VSP_002839"/>
    </isoform>
    <isoform>
        <id>Q61584-5</id>
        <name>D</name>
        <sequence type="described" ref="VSP_002836 VSP_002839"/>
    </isoform>
    <isoform>
        <id>Q61584-6</id>
        <name>F</name>
        <sequence type="described" ref="VSP_002836"/>
    </isoform>
    <isoform>
        <id>Q61584-7</id>
        <name>G</name>
        <sequence type="described" ref="VSP_002837"/>
    </isoform>
</comment>
<comment type="tissue specificity">
    <text evidence="8 12 13 17 20 22">In early embryogenesis, highest expression in somites and central nervous system (PubMed:10409431, PubMed:16000371). Also expressed in spinal cord, surrounding mesenchymal tissue and undifferentiated gonad (PubMed:10409431). In mid-embryogenesis, most prominent in gonad and muscle tissue (PubMed:10409431). Also expressed in liver, retina, telencephalon and mesencephalon (PubMed:10409431). In late embryogenesis, restricted to skeletal muscle and proliferative active layers of brain (PubMed:10409431). After birth, highly expressed in postmeiotic spermatids (at protein level) (PubMed:10409431, PubMed:35951695). Expressed in neurons of the developing hippocampus (PubMed:22022532). Expressed in new cells generated in the adult dentate gyrus throughout the progression of adult neurogenesis (PubMed:28204491). Intermediate levels are found in heart, liver and kidney with lower levels in brain and skeletal muscle (PubMed:10409431). Isoform(s) containing the 27 amino acid pocket (residues 564-590) are present in adult heart and muscle (PubMed:10409431, PubMed:32328638).</text>
</comment>
<comment type="tissue specificity">
    <molecule>Isoform A</molecule>
    <text evidence="8 20">Present in adult heart and muscle.</text>
</comment>
<comment type="tissue specificity">
    <molecule>Isoform B</molecule>
    <text evidence="8 20">Present in adult heart and muscle.</text>
</comment>
<comment type="tissue specificity">
    <molecule>Isoform E</molecule>
    <text evidence="8 20">Present in adult heart and muscle.</text>
</comment>
<comment type="tissue specificity">
    <molecule>Isoform F</molecule>
    <text evidence="8 20">Present in adult heart and muscle.</text>
</comment>
<comment type="tissue specificity">
    <molecule>Isoform G</molecule>
    <text evidence="8 20">Present in adult heart and muscle.</text>
</comment>
<comment type="domain">
    <text evidence="22">Disordered region at the C-terminus undergoes liquid-liquid phase separation (LLPS) for the formation of a membraneless compartment that stores mRNAs.</text>
</comment>
<comment type="domain">
    <text evidence="2">The tandem Agenet-like domains preferentially recognize trimethylated histone peptides.</text>
</comment>
<comment type="domain">
    <text evidence="2">CC1 and CC2 domains are required for homodimerization and FXR1-network nucleation. CC domains also mediate interaction with other proteins containing similar CC domains.</text>
</comment>
<comment type="PTM">
    <text evidence="2 15 18 21">Phosphorylation at Ser-449 by PAK1 promotes its relocalization to stress granules and activity (By similarity). Phosphorylated by MAPK1/ERK2, promoting subsequent phosphorylation by GSK3B (PubMed:26240334). Phosphorylated by GSK3B, promoting ubiquitination and degradation by the proteasome (PubMed:26240334, PubMed:29142209, PubMed:32893934).</text>
</comment>
<comment type="PTM">
    <text evidence="2 15 18 21">Ubiquitinated by the SCF(FBXO4) complex, leading to its degradation by the proteasome: ubiquitination by the SCF(FBXO4) complex takes place following phosphorylation by GSK3B (PubMed:26240334, PubMed:29142209, PubMed:32893934). Ubiquitinated and degraded in a GSK3B-dependent manner in during both scaling and sleep deprivation (PubMed:32893934). Ubiquitinated via 'Lys-63'-linked ubiquitin, leading to its degradation: interaction with CEP63 inhibits 'Lys-63'-linked ubiquitination (By similarity).</text>
</comment>
<comment type="disruption phenotype">
    <text evidence="10 11 14 17 22">Death shortly after birth (PubMed:15128702). Mice expressing low levels of Fxr1 show postnatal growth retardation with reduced increase in muscle mass and strength (PubMed:15128702). They die within 3 weeks of birth (PubMed:15128702). Conditional deletion in macrophages leads to enhanced Tumor necrosis factor (TNF) production (PubMed:15548538). Conditional deletion in excitatory neurons in the forebrain of early postnatal mice enhances long-term storage of spatial memories, hippocampal late-phase long-term potentiation: defects are caused by de novo GRIA2/GluA2 synthesis (PubMed:25456134). Conditional deletion in adult neural stem cells results in fewer adult-born cells in the dentate gyrus, reducing populations across different stages of neurogenesis, including radial glia-like cells, intermediate progenitors, neuroblasts, immature neurons and neurons (PubMed:28204491). Conditional deletion in germline cells leads to male infertility: defects are caused by impaired translation of a subset of transcripts in adult mouse testes (PubMed:35951695).</text>
</comment>
<comment type="similarity">
    <text evidence="28">Belongs to the FMR1 family.</text>
</comment>
<keyword id="KW-0007">Acetylation</keyword>
<keyword id="KW-0025">Alternative splicing</keyword>
<keyword id="KW-0966">Cell projection</keyword>
<keyword id="KW-0963">Cytoplasm</keyword>
<keyword id="KW-0217">Developmental protein</keyword>
<keyword id="KW-0221">Differentiation</keyword>
<keyword id="KW-1017">Isopeptide bond</keyword>
<keyword id="KW-0488">Methylation</keyword>
<keyword id="KW-0517">Myogenesis</keyword>
<keyword id="KW-0539">Nucleus</keyword>
<keyword id="KW-0597">Phosphoprotein</keyword>
<keyword id="KW-1185">Reference proteome</keyword>
<keyword id="KW-0677">Repeat</keyword>
<keyword id="KW-0694">RNA-binding</keyword>
<keyword id="KW-0744">Spermatogenesis</keyword>
<keyword id="KW-0770">Synapse</keyword>
<keyword id="KW-0832">Ubl conjugation</keyword>